<comment type="function">
    <text evidence="1">Catalyzes the gamma-elimination of phosphate from L-phosphohomoserine and the beta-addition of water to produce L-threonine.</text>
</comment>
<comment type="catalytic activity">
    <reaction>
        <text>O-phospho-L-homoserine + H2O = L-threonine + phosphate</text>
        <dbReference type="Rhea" id="RHEA:10840"/>
        <dbReference type="ChEBI" id="CHEBI:15377"/>
        <dbReference type="ChEBI" id="CHEBI:43474"/>
        <dbReference type="ChEBI" id="CHEBI:57590"/>
        <dbReference type="ChEBI" id="CHEBI:57926"/>
        <dbReference type="EC" id="4.2.3.1"/>
    </reaction>
</comment>
<comment type="cofactor">
    <cofactor evidence="1">
        <name>pyridoxal 5'-phosphate</name>
        <dbReference type="ChEBI" id="CHEBI:597326"/>
    </cofactor>
</comment>
<comment type="pathway">
    <text>Amino-acid biosynthesis; L-threonine biosynthesis; L-threonine from L-aspartate: step 5/5.</text>
</comment>
<comment type="similarity">
    <text evidence="2">Belongs to the threonine synthase family.</text>
</comment>
<sequence>MKLYNLKNHNEQVNFETAVKLGLGQKQGLFFPVKLPIMTPVELSKILKMDFITRSTEILSKFISSEISKEVLHEHVKKAFSFSKPLKICINKNISCFELFHGPTLAFKDFGARFMAQMILCLNKKNESFTILTATSGDTGAAVAHAFYGMKNIRVIILYPKGKITLLQEQLFCTLGKNIKTISINGSFDDCQKLVKKAFDDKKLKESIGLNSANSINISRLLAQICYYFEAFSLISEEKRKNLVIAVPCGNFGNLTAGLLAKSLGLPIQSFIACTNSNDTVPRFLNSGKWNPKKTVSTISNAMDISCPNNWPRIEELFRRKKWDLKELRFGSVSDNVTKETLKELFRMGYVSEPHAAIAYRLLHDQLKKEEFGLFLGTAHPSKFKDTVEKILENSISLPKELKNRNNLPLLSHNINPDFNKLKEFLLEK</sequence>
<dbReference type="EC" id="4.2.3.1"/>
<dbReference type="EMBL" id="AE013218">
    <property type="protein sequence ID" value="AAM67751.1"/>
    <property type="molecule type" value="Genomic_DNA"/>
</dbReference>
<dbReference type="RefSeq" id="WP_011053718.1">
    <property type="nucleotide sequence ID" value="NC_004061.1"/>
</dbReference>
<dbReference type="SMR" id="Q8K9V1"/>
<dbReference type="STRING" id="198804.BUsg_186"/>
<dbReference type="GeneID" id="93003654"/>
<dbReference type="KEGG" id="bas:BUsg_186"/>
<dbReference type="eggNOG" id="COG0498">
    <property type="taxonomic scope" value="Bacteria"/>
</dbReference>
<dbReference type="HOGENOM" id="CLU_015170_0_0_6"/>
<dbReference type="UniPathway" id="UPA00050">
    <property type="reaction ID" value="UER00065"/>
</dbReference>
<dbReference type="Proteomes" id="UP000000416">
    <property type="component" value="Chromosome"/>
</dbReference>
<dbReference type="GO" id="GO:0030170">
    <property type="term" value="F:pyridoxal phosphate binding"/>
    <property type="evidence" value="ECO:0007669"/>
    <property type="project" value="InterPro"/>
</dbReference>
<dbReference type="GO" id="GO:0004795">
    <property type="term" value="F:threonine synthase activity"/>
    <property type="evidence" value="ECO:0007669"/>
    <property type="project" value="UniProtKB-EC"/>
</dbReference>
<dbReference type="GO" id="GO:0009088">
    <property type="term" value="P:threonine biosynthetic process"/>
    <property type="evidence" value="ECO:0007669"/>
    <property type="project" value="UniProtKB-UniPathway"/>
</dbReference>
<dbReference type="FunFam" id="3.40.50.1100:FF:000026">
    <property type="entry name" value="Threonine synthase"/>
    <property type="match status" value="1"/>
</dbReference>
<dbReference type="Gene3D" id="3.40.50.1100">
    <property type="match status" value="2"/>
</dbReference>
<dbReference type="Gene3D" id="3.90.1380.10">
    <property type="entry name" value="Threonine synthase, N-terminal domain"/>
    <property type="match status" value="1"/>
</dbReference>
<dbReference type="InterPro" id="IPR000634">
    <property type="entry name" value="Ser/Thr_deHydtase_PyrdxlP-BS"/>
</dbReference>
<dbReference type="InterPro" id="IPR029144">
    <property type="entry name" value="Thr_synth_N"/>
</dbReference>
<dbReference type="InterPro" id="IPR037158">
    <property type="entry name" value="Thr_synth_N_sf"/>
</dbReference>
<dbReference type="InterPro" id="IPR004450">
    <property type="entry name" value="Thr_synthase-like"/>
</dbReference>
<dbReference type="InterPro" id="IPR051166">
    <property type="entry name" value="Threonine_Synthase"/>
</dbReference>
<dbReference type="InterPro" id="IPR001926">
    <property type="entry name" value="TrpB-like_PALP"/>
</dbReference>
<dbReference type="InterPro" id="IPR036052">
    <property type="entry name" value="TrpB-like_PALP_sf"/>
</dbReference>
<dbReference type="NCBIfam" id="TIGR00260">
    <property type="entry name" value="thrC"/>
    <property type="match status" value="1"/>
</dbReference>
<dbReference type="PANTHER" id="PTHR42690">
    <property type="entry name" value="THREONINE SYNTHASE FAMILY MEMBER"/>
    <property type="match status" value="1"/>
</dbReference>
<dbReference type="PANTHER" id="PTHR42690:SF1">
    <property type="entry name" value="THREONINE SYNTHASE-LIKE 2"/>
    <property type="match status" value="1"/>
</dbReference>
<dbReference type="Pfam" id="PF00291">
    <property type="entry name" value="PALP"/>
    <property type="match status" value="1"/>
</dbReference>
<dbReference type="Pfam" id="PF14821">
    <property type="entry name" value="Thr_synth_N"/>
    <property type="match status" value="1"/>
</dbReference>
<dbReference type="SUPFAM" id="SSF53686">
    <property type="entry name" value="Tryptophan synthase beta subunit-like PLP-dependent enzymes"/>
    <property type="match status" value="1"/>
</dbReference>
<dbReference type="PROSITE" id="PS00165">
    <property type="entry name" value="DEHYDRATASE_SER_THR"/>
    <property type="match status" value="1"/>
</dbReference>
<reference key="1">
    <citation type="journal article" date="2002" name="Science">
        <title>50 million years of genomic stasis in endosymbiotic bacteria.</title>
        <authorList>
            <person name="Tamas I."/>
            <person name="Klasson L."/>
            <person name="Canbaeck B."/>
            <person name="Naeslund A.K."/>
            <person name="Eriksson A.-S."/>
            <person name="Wernegreen J.J."/>
            <person name="Sandstroem J.P."/>
            <person name="Moran N.A."/>
            <person name="Andersson S.G.E."/>
        </authorList>
    </citation>
    <scope>NUCLEOTIDE SEQUENCE [LARGE SCALE GENOMIC DNA]</scope>
    <source>
        <strain>Sg</strain>
    </source>
</reference>
<keyword id="KW-0028">Amino-acid biosynthesis</keyword>
<keyword id="KW-0456">Lyase</keyword>
<keyword id="KW-0663">Pyridoxal phosphate</keyword>
<keyword id="KW-0791">Threonine biosynthesis</keyword>
<feature type="chain" id="PRO_0000185628" description="Threonine synthase">
    <location>
        <begin position="1"/>
        <end position="429"/>
    </location>
</feature>
<feature type="modified residue" description="N6-(pyridoxal phosphate)lysine" evidence="1">
    <location>
        <position position="108"/>
    </location>
</feature>
<proteinExistence type="inferred from homology"/>
<evidence type="ECO:0000250" key="1"/>
<evidence type="ECO:0000305" key="2"/>
<gene>
    <name type="primary">thrC</name>
    <name type="ordered locus">BUsg_186</name>
</gene>
<accession>Q8K9V1</accession>
<organism>
    <name type="scientific">Buchnera aphidicola subsp. Schizaphis graminum (strain Sg)</name>
    <dbReference type="NCBI Taxonomy" id="198804"/>
    <lineage>
        <taxon>Bacteria</taxon>
        <taxon>Pseudomonadati</taxon>
        <taxon>Pseudomonadota</taxon>
        <taxon>Gammaproteobacteria</taxon>
        <taxon>Enterobacterales</taxon>
        <taxon>Erwiniaceae</taxon>
        <taxon>Buchnera</taxon>
    </lineage>
</organism>
<protein>
    <recommendedName>
        <fullName>Threonine synthase</fullName>
        <shortName>TS</shortName>
        <ecNumber>4.2.3.1</ecNumber>
    </recommendedName>
</protein>
<name>THRC_BUCAP</name>